<protein>
    <recommendedName>
        <fullName evidence="1">ATP-dependent Clp protease proteolytic subunit</fullName>
        <ecNumber evidence="1">3.4.21.92</ecNumber>
    </recommendedName>
    <alternativeName>
        <fullName evidence="1">Endopeptidase Clp</fullName>
    </alternativeName>
</protein>
<organism>
    <name type="scientific">Staphylococcus aureus (strain MSSA476)</name>
    <dbReference type="NCBI Taxonomy" id="282459"/>
    <lineage>
        <taxon>Bacteria</taxon>
        <taxon>Bacillati</taxon>
        <taxon>Bacillota</taxon>
        <taxon>Bacilli</taxon>
        <taxon>Bacillales</taxon>
        <taxon>Staphylococcaceae</taxon>
        <taxon>Staphylococcus</taxon>
    </lineage>
</organism>
<reference key="1">
    <citation type="journal article" date="2004" name="Proc. Natl. Acad. Sci. U.S.A.">
        <title>Complete genomes of two clinical Staphylococcus aureus strains: evidence for the rapid evolution of virulence and drug resistance.</title>
        <authorList>
            <person name="Holden M.T.G."/>
            <person name="Feil E.J."/>
            <person name="Lindsay J.A."/>
            <person name="Peacock S.J."/>
            <person name="Day N.P.J."/>
            <person name="Enright M.C."/>
            <person name="Foster T.J."/>
            <person name="Moore C.E."/>
            <person name="Hurst L."/>
            <person name="Atkin R."/>
            <person name="Barron A."/>
            <person name="Bason N."/>
            <person name="Bentley S.D."/>
            <person name="Chillingworth C."/>
            <person name="Chillingworth T."/>
            <person name="Churcher C."/>
            <person name="Clark L."/>
            <person name="Corton C."/>
            <person name="Cronin A."/>
            <person name="Doggett J."/>
            <person name="Dowd L."/>
            <person name="Feltwell T."/>
            <person name="Hance Z."/>
            <person name="Harris B."/>
            <person name="Hauser H."/>
            <person name="Holroyd S."/>
            <person name="Jagels K."/>
            <person name="James K.D."/>
            <person name="Lennard N."/>
            <person name="Line A."/>
            <person name="Mayes R."/>
            <person name="Moule S."/>
            <person name="Mungall K."/>
            <person name="Ormond D."/>
            <person name="Quail M.A."/>
            <person name="Rabbinowitsch E."/>
            <person name="Rutherford K.M."/>
            <person name="Sanders M."/>
            <person name="Sharp S."/>
            <person name="Simmonds M."/>
            <person name="Stevens K."/>
            <person name="Whitehead S."/>
            <person name="Barrell B.G."/>
            <person name="Spratt B.G."/>
            <person name="Parkhill J."/>
        </authorList>
    </citation>
    <scope>NUCLEOTIDE SEQUENCE [LARGE SCALE GENOMIC DNA]</scope>
    <source>
        <strain>MSSA476</strain>
    </source>
</reference>
<feature type="chain" id="PRO_0000179653" description="ATP-dependent Clp protease proteolytic subunit">
    <location>
        <begin position="1"/>
        <end position="195"/>
    </location>
</feature>
<feature type="active site" description="Nucleophile" evidence="1">
    <location>
        <position position="98"/>
    </location>
</feature>
<feature type="active site" evidence="1">
    <location>
        <position position="123"/>
    </location>
</feature>
<comment type="function">
    <text evidence="1">Cleaves peptides in various proteins in a process that requires ATP hydrolysis. Has a chymotrypsin-like activity. Plays a major role in the degradation of misfolded proteins.</text>
</comment>
<comment type="catalytic activity">
    <reaction evidence="1">
        <text>Hydrolysis of proteins to small peptides in the presence of ATP and magnesium. alpha-casein is the usual test substrate. In the absence of ATP, only oligopeptides shorter than five residues are hydrolyzed (such as succinyl-Leu-Tyr-|-NHMec, and Leu-Tyr-Leu-|-Tyr-Trp, in which cleavage of the -Tyr-|-Leu- and -Tyr-|-Trp bonds also occurs).</text>
        <dbReference type="EC" id="3.4.21.92"/>
    </reaction>
</comment>
<comment type="subunit">
    <text evidence="1">Fourteen ClpP subunits assemble into 2 heptameric rings which stack back to back to give a disk-like structure with a central cavity, resembling the structure of eukaryotic proteasomes.</text>
</comment>
<comment type="subcellular location">
    <subcellularLocation>
        <location evidence="1">Cytoplasm</location>
    </subcellularLocation>
</comment>
<comment type="similarity">
    <text evidence="1">Belongs to the peptidase S14 family.</text>
</comment>
<proteinExistence type="inferred from homology"/>
<evidence type="ECO:0000255" key="1">
    <source>
        <dbReference type="HAMAP-Rule" id="MF_00444"/>
    </source>
</evidence>
<accession>Q6GB62</accession>
<name>CLPP_STAAS</name>
<gene>
    <name evidence="1" type="primary">clpP</name>
    <name type="ordered locus">SAS0733</name>
</gene>
<keyword id="KW-0963">Cytoplasm</keyword>
<keyword id="KW-0378">Hydrolase</keyword>
<keyword id="KW-0645">Protease</keyword>
<keyword id="KW-0720">Serine protease</keyword>
<sequence>MNLIPTVIETTNRGERAYDIYSRLLKDRIIMLGSQIDDNVANSIVSQLLFLQAQDSEKDIYLYINSPGGSVTAGFAIYDTIQHIKPDVQTICIGMAASMGSFLLAAGAKGKRFALPNAEVMIHQPLGGAQGQATEIEIAANHILKTREKLNRILSERTGQSIEKIQKDTDRDNFLTAEEAKEYGLIDEVMVPETK</sequence>
<dbReference type="EC" id="3.4.21.92" evidence="1"/>
<dbReference type="EMBL" id="BX571857">
    <property type="protein sequence ID" value="CAG42509.1"/>
    <property type="molecule type" value="Genomic_DNA"/>
</dbReference>
<dbReference type="RefSeq" id="WP_001049165.1">
    <property type="nucleotide sequence ID" value="NC_002953.3"/>
</dbReference>
<dbReference type="SMR" id="Q6GB62"/>
<dbReference type="MEROPS" id="S14.001"/>
<dbReference type="GeneID" id="98345115"/>
<dbReference type="KEGG" id="sas:SAS0733"/>
<dbReference type="HOGENOM" id="CLU_058707_3_2_9"/>
<dbReference type="GO" id="GO:0005737">
    <property type="term" value="C:cytoplasm"/>
    <property type="evidence" value="ECO:0007669"/>
    <property type="project" value="UniProtKB-SubCell"/>
</dbReference>
<dbReference type="GO" id="GO:0009368">
    <property type="term" value="C:endopeptidase Clp complex"/>
    <property type="evidence" value="ECO:0007669"/>
    <property type="project" value="TreeGrafter"/>
</dbReference>
<dbReference type="GO" id="GO:0004176">
    <property type="term" value="F:ATP-dependent peptidase activity"/>
    <property type="evidence" value="ECO:0007669"/>
    <property type="project" value="InterPro"/>
</dbReference>
<dbReference type="GO" id="GO:0051117">
    <property type="term" value="F:ATPase binding"/>
    <property type="evidence" value="ECO:0007669"/>
    <property type="project" value="TreeGrafter"/>
</dbReference>
<dbReference type="GO" id="GO:0004252">
    <property type="term" value="F:serine-type endopeptidase activity"/>
    <property type="evidence" value="ECO:0007669"/>
    <property type="project" value="UniProtKB-UniRule"/>
</dbReference>
<dbReference type="GO" id="GO:0006515">
    <property type="term" value="P:protein quality control for misfolded or incompletely synthesized proteins"/>
    <property type="evidence" value="ECO:0007669"/>
    <property type="project" value="TreeGrafter"/>
</dbReference>
<dbReference type="CDD" id="cd07017">
    <property type="entry name" value="S14_ClpP_2"/>
    <property type="match status" value="1"/>
</dbReference>
<dbReference type="FunFam" id="3.90.226.10:FF:000001">
    <property type="entry name" value="ATP-dependent Clp protease proteolytic subunit"/>
    <property type="match status" value="1"/>
</dbReference>
<dbReference type="Gene3D" id="3.90.226.10">
    <property type="entry name" value="2-enoyl-CoA Hydratase, Chain A, domain 1"/>
    <property type="match status" value="1"/>
</dbReference>
<dbReference type="HAMAP" id="MF_00444">
    <property type="entry name" value="ClpP"/>
    <property type="match status" value="1"/>
</dbReference>
<dbReference type="InterPro" id="IPR001907">
    <property type="entry name" value="ClpP"/>
</dbReference>
<dbReference type="InterPro" id="IPR029045">
    <property type="entry name" value="ClpP/crotonase-like_dom_sf"/>
</dbReference>
<dbReference type="InterPro" id="IPR023562">
    <property type="entry name" value="ClpP/TepA"/>
</dbReference>
<dbReference type="InterPro" id="IPR033135">
    <property type="entry name" value="ClpP_His_AS"/>
</dbReference>
<dbReference type="InterPro" id="IPR018215">
    <property type="entry name" value="ClpP_Ser_AS"/>
</dbReference>
<dbReference type="NCBIfam" id="TIGR00493">
    <property type="entry name" value="clpP"/>
    <property type="match status" value="1"/>
</dbReference>
<dbReference type="NCBIfam" id="NF001368">
    <property type="entry name" value="PRK00277.1"/>
    <property type="match status" value="1"/>
</dbReference>
<dbReference type="NCBIfam" id="NF009205">
    <property type="entry name" value="PRK12553.1"/>
    <property type="match status" value="1"/>
</dbReference>
<dbReference type="PANTHER" id="PTHR10381">
    <property type="entry name" value="ATP-DEPENDENT CLP PROTEASE PROTEOLYTIC SUBUNIT"/>
    <property type="match status" value="1"/>
</dbReference>
<dbReference type="PANTHER" id="PTHR10381:SF70">
    <property type="entry name" value="ATP-DEPENDENT CLP PROTEASE PROTEOLYTIC SUBUNIT"/>
    <property type="match status" value="1"/>
</dbReference>
<dbReference type="Pfam" id="PF00574">
    <property type="entry name" value="CLP_protease"/>
    <property type="match status" value="1"/>
</dbReference>
<dbReference type="PRINTS" id="PR00127">
    <property type="entry name" value="CLPPROTEASEP"/>
</dbReference>
<dbReference type="SUPFAM" id="SSF52096">
    <property type="entry name" value="ClpP/crotonase"/>
    <property type="match status" value="1"/>
</dbReference>
<dbReference type="PROSITE" id="PS00382">
    <property type="entry name" value="CLP_PROTEASE_HIS"/>
    <property type="match status" value="1"/>
</dbReference>
<dbReference type="PROSITE" id="PS00381">
    <property type="entry name" value="CLP_PROTEASE_SER"/>
    <property type="match status" value="1"/>
</dbReference>